<evidence type="ECO:0000250" key="1">
    <source>
        <dbReference type="UniProtKB" id="P01210"/>
    </source>
</evidence>
<evidence type="ECO:0000269" key="2">
    <source>
    </source>
</evidence>
<evidence type="ECO:0000269" key="3">
    <source>
    </source>
</evidence>
<evidence type="ECO:0000269" key="4">
    <source ref="1"/>
</evidence>
<evidence type="ECO:0000269" key="5">
    <source ref="2"/>
</evidence>
<evidence type="ECO:0000303" key="6">
    <source ref="1"/>
</evidence>
<evidence type="ECO:0000305" key="7"/>
<evidence type="ECO:0000305" key="8">
    <source ref="1"/>
</evidence>
<evidence type="ECO:0000305" key="9">
    <source ref="2"/>
</evidence>
<dbReference type="GO" id="GO:0005576">
    <property type="term" value="C:extracellular region"/>
    <property type="evidence" value="ECO:0007669"/>
    <property type="project" value="UniProtKB-SubCell"/>
</dbReference>
<dbReference type="GO" id="GO:0005246">
    <property type="term" value="F:calcium channel regulator activity"/>
    <property type="evidence" value="ECO:0007669"/>
    <property type="project" value="UniProtKB-KW"/>
</dbReference>
<dbReference type="GO" id="GO:0090729">
    <property type="term" value="F:toxin activity"/>
    <property type="evidence" value="ECO:0007669"/>
    <property type="project" value="UniProtKB-KW"/>
</dbReference>
<dbReference type="GO" id="GO:0007218">
    <property type="term" value="P:neuropeptide signaling pathway"/>
    <property type="evidence" value="ECO:0007669"/>
    <property type="project" value="InterPro"/>
</dbReference>
<dbReference type="InterPro" id="IPR006024">
    <property type="entry name" value="Opioid_neupept"/>
</dbReference>
<dbReference type="Pfam" id="PF01160">
    <property type="entry name" value="Opiods_neuropep"/>
    <property type="match status" value="1"/>
</dbReference>
<comment type="function">
    <text evidence="4 5">Paralytic toxin that immobilizes a mealworm for 7 days (Ref.1). Inhibits the transient receptor potential cation channel subfamily V member 6 (TRPV6) (Ref.2).</text>
</comment>
<comment type="subunit">
    <text evidence="8 9">Member of a multiprotein complex.</text>
</comment>
<comment type="subcellular location">
    <subcellularLocation>
        <location evidence="4">Secreted</location>
    </subcellularLocation>
</comment>
<comment type="tissue specificity">
    <text evidence="8">Salivary gland.</text>
</comment>
<comment type="mass spectrometry"/>
<comment type="biotechnology">
    <text evidence="2 3">The two short analogs SOR-C13 (AA 42-54) and SOR-C27 (AA 28-54) bind to and inhibit calcium influx through TRPV6 expressed in HEK-293 cells (EC(50)=14 nM and 65 nM respectively). Since TRPV6 channels are overexpressed in a number of cancers (including breast, prostate, ovarian), these analogs have potential application as diagnostic and therapeutic tools to detect or treat TRPV6-rich tumors. It is noteworthy that these peptides delivered a conjugated fluorescent label to TRPV6-rich xenografts of human ovarian cancer (SK-OV-3) and prostate cancer (DU-145) and negatively affected a number of epithelial-type cancer cell lines including SK-OV-3 in preliminary in vivo and in vitro studies. Additionally, a negative contrast MRI agent to which SOR-C27 was chemically attached targeted SK-OV-3 xenografts allowing detection and accurate determination of tumor volume (PubMed:23554944). Furthermore, daily injection into SK-OV-3 xenografts mice with SOR-C13 or SOR-C27 over 12 days inhibits tumor growth by more that 50% at the highest dose compared to non-treated controls (PubMed:28150073).</text>
</comment>
<comment type="pharmaceutical">
    <text evidence="3">The shorter analog SOC-C13 is under phase I clinical trial by Soricimed. This short analog (AA 42-54) of soricidin is tested for the treatment of advanced solid tumors of epithelial origin which are refractory to all standard-of-care treatments.</text>
</comment>
<comment type="similarity">
    <text evidence="7">Belongs to the opioid neuropeptide precursor family.</text>
</comment>
<protein>
    <recommendedName>
        <fullName evidence="6">Soricidin</fullName>
    </recommendedName>
    <alternativeName>
        <fullName evidence="6">Ps peptide</fullName>
    </alternativeName>
</protein>
<reference key="1">
    <citation type="patent" date="2004-06-03" number="WO2004046178">
        <title>Shrew paralytic peptide for use in neuromuscular therapy.</title>
        <authorList>
            <person name="Stewart J.M."/>
            <person name="Steeves B.J."/>
            <person name="Vernes K."/>
        </authorList>
    </citation>
    <scope>PROTEIN SEQUENCE</scope>
    <scope>MASS SPECTROMETRY</scope>
    <scope>FUNCTION</scope>
    <scope>SUBCELLULAR LOCATION</scope>
    <source>
        <tissue>Saliva</tissue>
    </source>
</reference>
<reference key="2">
    <citation type="patent" date="2006-10-10" number="US7119168">
        <title>Paralytic peptide for use in neuromuscular therapy.</title>
        <authorList>
            <person name="Stewart J.M."/>
            <person name="Steeves B.J."/>
            <person name="Vernes K."/>
        </authorList>
    </citation>
    <scope>FUNCTION</scope>
    <source>
        <tissue>Saliva</tissue>
    </source>
</reference>
<reference key="3">
    <citation type="journal article" date="2013" name="PLoS ONE">
        <title>In vivo detection of human TRPV6-rich tumors with anti-cancer peptides derived from soricidin.</title>
        <authorList>
            <person name="Bowen C.V."/>
            <person name="DeBay D."/>
            <person name="Ewart H.S."/>
            <person name="Gallant P."/>
            <person name="Gormley S."/>
            <person name="Ilenchuk T.T."/>
            <person name="Iqbal U."/>
            <person name="Lutes T."/>
            <person name="Martina M."/>
            <person name="Mealing G."/>
            <person name="Merkley N."/>
            <person name="Sperker S."/>
            <person name="Moreno M.J."/>
            <person name="Rice C."/>
            <person name="Syvitski R.T."/>
            <person name="Stewart J.M."/>
        </authorList>
    </citation>
    <scope>BIOTECHNOLOGY (ANALOGS SOR-C13 AND SOR-C27)</scope>
</reference>
<reference key="4">
    <citation type="journal article" date="2017" name="Invest. New Drugs">
        <title>First-in-human phase I study of SOR-C13, a TRPV6 calcium channel inhibitor, in patients with advanced solid tumors.</title>
        <authorList>
            <person name="Fu S."/>
            <person name="Hirte H."/>
            <person name="Welch S."/>
            <person name="Ilenchuk T.T."/>
            <person name="Lutes T."/>
            <person name="Rice C."/>
            <person name="Fields N."/>
            <person name="Nemet A."/>
            <person name="Dugourd D."/>
            <person name="Piha-Paul S."/>
            <person name="Subbiah V."/>
            <person name="Liu L."/>
            <person name="Gong J."/>
            <person name="Hong D."/>
            <person name="Stewart J.M."/>
        </authorList>
    </citation>
    <scope>PHARMACEUTICAL (ANALOG SOR-C13)</scope>
</reference>
<reference key="5">
    <citation type="journal article" date="2017" name="Invest. New Drugs">
        <authorList>
            <person name="Fu S."/>
            <person name="Hirte H."/>
            <person name="Welch S."/>
            <person name="Ilenchuk T.T."/>
            <person name="Lutes T."/>
            <person name="Rice C."/>
            <person name="Fields N."/>
            <person name="Nemet A."/>
            <person name="Dugourd D."/>
            <person name="Piha-Paul S."/>
            <person name="Subbiah V."/>
            <person name="Liu L."/>
            <person name="Gong J."/>
            <person name="Hong D."/>
            <person name="Stewart J.M."/>
        </authorList>
    </citation>
    <scope>ERRATUM OF PUBMED:28150073</scope>
</reference>
<reference key="6">
    <citation type="journal article" date="2018" name="J. Cancer">
        <title>Inhibition of transient receptor potential vanilloid 6 channel, elevated in human ovarian cancers, reduces tumour growth in a xenograft model.</title>
        <authorList>
            <person name="Xue H."/>
            <person name="Wang Y."/>
            <person name="MacCormack T.J."/>
            <person name="Lutes T."/>
            <person name="Rice C."/>
            <person name="Davey M."/>
            <person name="Dugourd D."/>
            <person name="Ilenchuk T.T."/>
            <person name="Stewart J.M."/>
        </authorList>
    </citation>
    <scope>BIOTECHNOLOGY (ANALOGS SOR-C13 AND SOR-C27)</scope>
</reference>
<proteinExistence type="evidence at protein level"/>
<feature type="chain" id="PRO_0000283772" description="Soricidin" evidence="4">
    <location>
        <begin position="1"/>
        <end position="54"/>
    </location>
</feature>
<feature type="disulfide bond" evidence="1">
    <location>
        <begin position="2"/>
        <end position="23"/>
    </location>
</feature>
<feature type="disulfide bond" evidence="1">
    <location>
        <begin position="6"/>
        <end position="27"/>
    </location>
</feature>
<feature type="disulfide bond" evidence="1">
    <location>
        <begin position="9"/>
        <end position="41"/>
    </location>
</feature>
<sequence>DCSQDCAACSILARPAELNTETCILECEGKLSSNDTEGGLCKEFLHPSKVDLPR</sequence>
<organism>
    <name type="scientific">Blarina brevicauda</name>
    <name type="common">Northern short-tailed shrew</name>
    <dbReference type="NCBI Taxonomy" id="9387"/>
    <lineage>
        <taxon>Eukaryota</taxon>
        <taxon>Metazoa</taxon>
        <taxon>Chordata</taxon>
        <taxon>Craniata</taxon>
        <taxon>Vertebrata</taxon>
        <taxon>Euteleostomi</taxon>
        <taxon>Mammalia</taxon>
        <taxon>Eutheria</taxon>
        <taxon>Laurasiatheria</taxon>
        <taxon>Eulipotyphla</taxon>
        <taxon>Soricidae</taxon>
        <taxon>Soricinae</taxon>
        <taxon>Blarina</taxon>
    </lineage>
</organism>
<accession>P0C2P6</accession>
<name>SORI_BLABR</name>
<keyword id="KW-0108">Calcium channel impairing toxin</keyword>
<keyword id="KW-0903">Direct protein sequencing</keyword>
<keyword id="KW-1015">Disulfide bond</keyword>
<keyword id="KW-0872">Ion channel impairing toxin</keyword>
<keyword id="KW-0528">Neurotoxin</keyword>
<keyword id="KW-0582">Pharmaceutical</keyword>
<keyword id="KW-0964">Secreted</keyword>
<keyword id="KW-0800">Toxin</keyword>